<proteinExistence type="inferred from homology"/>
<sequence length="299" mass="32039">MANFPASLLILNGKSADNQPLREAITLLRDEGIQIHVRVTWEKGDAQRYVDEARRLGVETVIAGGGDGTINEVSTALILIRDGVAPALGLLPLGTANDFATSAGIPEALDKALKLAIAGNAMEIDMARVNDKTCFINMATGGFGTRITTETPEKLKAALGGVSYLIHGLMRMDTLTPDRCEIRGENFHWQGDALVIGIGNGRQAGGGQQLCPTALINDGLLQLRIFTGEELLPALFSTLTQSDDNPNIIDGASAWFDIHAPHEITFNLDGEPLSGQEFHIEVLPGALRCRLPPDCPLLR</sequence>
<organism>
    <name type="scientific">Salmonella newport (strain SL254)</name>
    <dbReference type="NCBI Taxonomy" id="423368"/>
    <lineage>
        <taxon>Bacteria</taxon>
        <taxon>Pseudomonadati</taxon>
        <taxon>Pseudomonadota</taxon>
        <taxon>Gammaproteobacteria</taxon>
        <taxon>Enterobacterales</taxon>
        <taxon>Enterobacteriaceae</taxon>
        <taxon>Salmonella</taxon>
    </lineage>
</organism>
<comment type="function">
    <text evidence="1">Probably phosphorylates lipids; the in vivo substrate is unknown.</text>
</comment>
<comment type="cofactor">
    <cofactor evidence="1">
        <name>Mg(2+)</name>
        <dbReference type="ChEBI" id="CHEBI:18420"/>
    </cofactor>
    <cofactor evidence="1">
        <name>Ca(2+)</name>
        <dbReference type="ChEBI" id="CHEBI:29108"/>
    </cofactor>
    <text evidence="1">Binds 1 Mg(2+) ion per subunit. Ca(2+) may be able to substitute.</text>
</comment>
<comment type="subcellular location">
    <subcellularLocation>
        <location evidence="1">Cytoplasm</location>
    </subcellularLocation>
</comment>
<comment type="similarity">
    <text evidence="1">Belongs to the diacylglycerol/lipid kinase family. YegS lipid kinase subfamily.</text>
</comment>
<keyword id="KW-0067">ATP-binding</keyword>
<keyword id="KW-0963">Cytoplasm</keyword>
<keyword id="KW-0418">Kinase</keyword>
<keyword id="KW-0444">Lipid biosynthesis</keyword>
<keyword id="KW-0443">Lipid metabolism</keyword>
<keyword id="KW-0460">Magnesium</keyword>
<keyword id="KW-0479">Metal-binding</keyword>
<keyword id="KW-0547">Nucleotide-binding</keyword>
<keyword id="KW-0594">Phospholipid biosynthesis</keyword>
<keyword id="KW-1208">Phospholipid metabolism</keyword>
<keyword id="KW-0808">Transferase</keyword>
<feature type="chain" id="PRO_1000144876" description="Probable lipid kinase YegS">
    <location>
        <begin position="1"/>
        <end position="299"/>
    </location>
</feature>
<feature type="domain" description="DAGKc" evidence="1">
    <location>
        <begin position="2"/>
        <end position="133"/>
    </location>
</feature>
<feature type="active site" description="Proton acceptor" evidence="1">
    <location>
        <position position="271"/>
    </location>
</feature>
<feature type="binding site" evidence="1">
    <location>
        <position position="40"/>
    </location>
    <ligand>
        <name>ATP</name>
        <dbReference type="ChEBI" id="CHEBI:30616"/>
    </ligand>
</feature>
<feature type="binding site" evidence="1">
    <location>
        <begin position="66"/>
        <end position="72"/>
    </location>
    <ligand>
        <name>ATP</name>
        <dbReference type="ChEBI" id="CHEBI:30616"/>
    </ligand>
</feature>
<feature type="binding site" evidence="1">
    <location>
        <position position="95"/>
    </location>
    <ligand>
        <name>ATP</name>
        <dbReference type="ChEBI" id="CHEBI:30616"/>
    </ligand>
</feature>
<feature type="binding site" evidence="1">
    <location>
        <position position="215"/>
    </location>
    <ligand>
        <name>Mg(2+)</name>
        <dbReference type="ChEBI" id="CHEBI:18420"/>
    </ligand>
</feature>
<feature type="binding site" evidence="1">
    <location>
        <position position="218"/>
    </location>
    <ligand>
        <name>Mg(2+)</name>
        <dbReference type="ChEBI" id="CHEBI:18420"/>
    </ligand>
</feature>
<feature type="binding site" evidence="1">
    <location>
        <position position="220"/>
    </location>
    <ligand>
        <name>Mg(2+)</name>
        <dbReference type="ChEBI" id="CHEBI:18420"/>
    </ligand>
</feature>
<evidence type="ECO:0000255" key="1">
    <source>
        <dbReference type="HAMAP-Rule" id="MF_01377"/>
    </source>
</evidence>
<protein>
    <recommendedName>
        <fullName evidence="1">Probable lipid kinase YegS</fullName>
        <ecNumber evidence="1">2.7.1.-</ecNumber>
    </recommendedName>
</protein>
<accession>B4SXX2</accession>
<reference key="1">
    <citation type="journal article" date="2011" name="J. Bacteriol.">
        <title>Comparative genomics of 28 Salmonella enterica isolates: evidence for CRISPR-mediated adaptive sublineage evolution.</title>
        <authorList>
            <person name="Fricke W.F."/>
            <person name="Mammel M.K."/>
            <person name="McDermott P.F."/>
            <person name="Tartera C."/>
            <person name="White D.G."/>
            <person name="Leclerc J.E."/>
            <person name="Ravel J."/>
            <person name="Cebula T.A."/>
        </authorList>
    </citation>
    <scope>NUCLEOTIDE SEQUENCE [LARGE SCALE GENOMIC DNA]</scope>
    <source>
        <strain>SL254</strain>
    </source>
</reference>
<dbReference type="EC" id="2.7.1.-" evidence="1"/>
<dbReference type="EMBL" id="CP001113">
    <property type="protein sequence ID" value="ACF62332.1"/>
    <property type="molecule type" value="Genomic_DNA"/>
</dbReference>
<dbReference type="RefSeq" id="WP_001273385.1">
    <property type="nucleotide sequence ID" value="NZ_CCMR01000002.1"/>
</dbReference>
<dbReference type="SMR" id="B4SXX2"/>
<dbReference type="KEGG" id="see:SNSL254_A2327"/>
<dbReference type="HOGENOM" id="CLU_045532_1_1_6"/>
<dbReference type="Proteomes" id="UP000008824">
    <property type="component" value="Chromosome"/>
</dbReference>
<dbReference type="GO" id="GO:0005737">
    <property type="term" value="C:cytoplasm"/>
    <property type="evidence" value="ECO:0007669"/>
    <property type="project" value="UniProtKB-SubCell"/>
</dbReference>
<dbReference type="GO" id="GO:0005886">
    <property type="term" value="C:plasma membrane"/>
    <property type="evidence" value="ECO:0007669"/>
    <property type="project" value="TreeGrafter"/>
</dbReference>
<dbReference type="GO" id="GO:0005524">
    <property type="term" value="F:ATP binding"/>
    <property type="evidence" value="ECO:0007669"/>
    <property type="project" value="UniProtKB-UniRule"/>
</dbReference>
<dbReference type="GO" id="GO:0001727">
    <property type="term" value="F:lipid kinase activity"/>
    <property type="evidence" value="ECO:0007669"/>
    <property type="project" value="UniProtKB-UniRule"/>
</dbReference>
<dbReference type="GO" id="GO:0000287">
    <property type="term" value="F:magnesium ion binding"/>
    <property type="evidence" value="ECO:0007669"/>
    <property type="project" value="UniProtKB-UniRule"/>
</dbReference>
<dbReference type="GO" id="GO:0008654">
    <property type="term" value="P:phospholipid biosynthetic process"/>
    <property type="evidence" value="ECO:0007669"/>
    <property type="project" value="UniProtKB-UniRule"/>
</dbReference>
<dbReference type="FunFam" id="3.40.50.10330:FF:000008">
    <property type="entry name" value="Probable lipid kinase YegS"/>
    <property type="match status" value="1"/>
</dbReference>
<dbReference type="Gene3D" id="2.60.200.40">
    <property type="match status" value="1"/>
</dbReference>
<dbReference type="Gene3D" id="3.40.50.10330">
    <property type="entry name" value="Probable inorganic polyphosphate/atp-NAD kinase, domain 1"/>
    <property type="match status" value="1"/>
</dbReference>
<dbReference type="HAMAP" id="MF_01377">
    <property type="entry name" value="YegS"/>
    <property type="match status" value="1"/>
</dbReference>
<dbReference type="InterPro" id="IPR017438">
    <property type="entry name" value="ATP-NAD_kinase_N"/>
</dbReference>
<dbReference type="InterPro" id="IPR005218">
    <property type="entry name" value="Diacylglycerol/lipid_kinase"/>
</dbReference>
<dbReference type="InterPro" id="IPR001206">
    <property type="entry name" value="Diacylglycerol_kinase_cat_dom"/>
</dbReference>
<dbReference type="InterPro" id="IPR022433">
    <property type="entry name" value="Lip_kinase_YegS"/>
</dbReference>
<dbReference type="InterPro" id="IPR050187">
    <property type="entry name" value="Lipid_Phosphate_FormReg"/>
</dbReference>
<dbReference type="InterPro" id="IPR016064">
    <property type="entry name" value="NAD/diacylglycerol_kinase_sf"/>
</dbReference>
<dbReference type="InterPro" id="IPR045540">
    <property type="entry name" value="YegS/DAGK_C"/>
</dbReference>
<dbReference type="NCBIfam" id="TIGR03702">
    <property type="entry name" value="lip_kinase_YegS"/>
    <property type="match status" value="1"/>
</dbReference>
<dbReference type="NCBIfam" id="NF009602">
    <property type="entry name" value="PRK13054.1"/>
    <property type="match status" value="1"/>
</dbReference>
<dbReference type="NCBIfam" id="TIGR00147">
    <property type="entry name" value="YegS/Rv2252/BmrU family lipid kinase"/>
    <property type="match status" value="1"/>
</dbReference>
<dbReference type="PANTHER" id="PTHR12358:SF106">
    <property type="entry name" value="LIPID KINASE YEGS"/>
    <property type="match status" value="1"/>
</dbReference>
<dbReference type="PANTHER" id="PTHR12358">
    <property type="entry name" value="SPHINGOSINE KINASE"/>
    <property type="match status" value="1"/>
</dbReference>
<dbReference type="Pfam" id="PF00781">
    <property type="entry name" value="DAGK_cat"/>
    <property type="match status" value="1"/>
</dbReference>
<dbReference type="Pfam" id="PF19279">
    <property type="entry name" value="YegS_C"/>
    <property type="match status" value="1"/>
</dbReference>
<dbReference type="SMART" id="SM00046">
    <property type="entry name" value="DAGKc"/>
    <property type="match status" value="1"/>
</dbReference>
<dbReference type="SUPFAM" id="SSF111331">
    <property type="entry name" value="NAD kinase/diacylglycerol kinase-like"/>
    <property type="match status" value="1"/>
</dbReference>
<dbReference type="PROSITE" id="PS50146">
    <property type="entry name" value="DAGK"/>
    <property type="match status" value="1"/>
</dbReference>
<name>YEGS_SALNS</name>
<gene>
    <name evidence="1" type="primary">yegS</name>
    <name type="ordered locus">SNSL254_A2327</name>
</gene>